<proteinExistence type="inferred from homology"/>
<name>DEOC_MACCJ</name>
<keyword id="KW-0963">Cytoplasm</keyword>
<keyword id="KW-0456">Lyase</keyword>
<keyword id="KW-1185">Reference proteome</keyword>
<keyword id="KW-0704">Schiff base</keyword>
<gene>
    <name evidence="1" type="primary">deoC</name>
    <name type="ordered locus">MCCL_1796</name>
</gene>
<comment type="function">
    <text evidence="1">Catalyzes a reversible aldol reaction between acetaldehyde and D-glyceraldehyde 3-phosphate to generate 2-deoxy-D-ribose 5-phosphate.</text>
</comment>
<comment type="catalytic activity">
    <reaction evidence="1">
        <text>2-deoxy-D-ribose 5-phosphate = D-glyceraldehyde 3-phosphate + acetaldehyde</text>
        <dbReference type="Rhea" id="RHEA:12821"/>
        <dbReference type="ChEBI" id="CHEBI:15343"/>
        <dbReference type="ChEBI" id="CHEBI:59776"/>
        <dbReference type="ChEBI" id="CHEBI:62877"/>
        <dbReference type="EC" id="4.1.2.4"/>
    </reaction>
</comment>
<comment type="pathway">
    <text evidence="1">Carbohydrate degradation; 2-deoxy-D-ribose 1-phosphate degradation; D-glyceraldehyde 3-phosphate and acetaldehyde from 2-deoxy-alpha-D-ribose 1-phosphate: step 2/2.</text>
</comment>
<comment type="subcellular location">
    <subcellularLocation>
        <location evidence="1">Cytoplasm</location>
    </subcellularLocation>
</comment>
<comment type="similarity">
    <text evidence="1">Belongs to the DeoC/FbaB aldolase family. DeoC type 1 subfamily.</text>
</comment>
<accession>B9E8I5</accession>
<protein>
    <recommendedName>
        <fullName evidence="1">Deoxyribose-phosphate aldolase</fullName>
        <shortName evidence="1">DERA</shortName>
        <ecNumber evidence="1">4.1.2.4</ecNumber>
    </recommendedName>
    <alternativeName>
        <fullName evidence="1">2-deoxy-D-ribose 5-phosphate aldolase</fullName>
    </alternativeName>
    <alternativeName>
        <fullName evidence="1">Phosphodeoxyriboaldolase</fullName>
        <shortName evidence="1">Deoxyriboaldolase</shortName>
    </alternativeName>
</protein>
<sequence length="220" mass="23124">MNLAKYIDHTALKPETTKAQIAQLAQEAREYEFMSVCVNPAHVKYAKSLLEGTDVLVCTVIGFPLGANTPAVKAFETKDAIADGAGEVDMVINIGALKDKNYDLVAEDIKAVVDAAGDVTTKVIIETALLTDEEKVKACEIAQAQGADFVKTSTGFSTGGATKEDVALMRKTVGPDMGVKASGGVRSYEDVMTMIEAGATRIGASAGVQILKGEEAKGDY</sequence>
<feature type="chain" id="PRO_1000119179" description="Deoxyribose-phosphate aldolase">
    <location>
        <begin position="1"/>
        <end position="220"/>
    </location>
</feature>
<feature type="active site" description="Proton donor/acceptor" evidence="1">
    <location>
        <position position="89"/>
    </location>
</feature>
<feature type="active site" description="Schiff-base intermediate with acetaldehyde" evidence="1">
    <location>
        <position position="151"/>
    </location>
</feature>
<feature type="active site" description="Proton donor/acceptor" evidence="1">
    <location>
        <position position="180"/>
    </location>
</feature>
<reference key="1">
    <citation type="journal article" date="2009" name="J. Bacteriol.">
        <title>Complete genome sequence of Macrococcus caseolyticus strain JCSCS5402, reflecting the ancestral genome of the human-pathogenic staphylococci.</title>
        <authorList>
            <person name="Baba T."/>
            <person name="Kuwahara-Arai K."/>
            <person name="Uchiyama I."/>
            <person name="Takeuchi F."/>
            <person name="Ito T."/>
            <person name="Hiramatsu K."/>
        </authorList>
    </citation>
    <scope>NUCLEOTIDE SEQUENCE [LARGE SCALE GENOMIC DNA]</scope>
    <source>
        <strain>JCSC5402</strain>
    </source>
</reference>
<organism>
    <name type="scientific">Macrococcus caseolyticus (strain JCSC5402)</name>
    <name type="common">Macrococcoides caseolyticum</name>
    <dbReference type="NCBI Taxonomy" id="458233"/>
    <lineage>
        <taxon>Bacteria</taxon>
        <taxon>Bacillati</taxon>
        <taxon>Bacillota</taxon>
        <taxon>Bacilli</taxon>
        <taxon>Bacillales</taxon>
        <taxon>Staphylococcaceae</taxon>
        <taxon>Macrococcoides</taxon>
    </lineage>
</organism>
<dbReference type="EC" id="4.1.2.4" evidence="1"/>
<dbReference type="EMBL" id="AP009484">
    <property type="protein sequence ID" value="BAH18503.1"/>
    <property type="molecule type" value="Genomic_DNA"/>
</dbReference>
<dbReference type="RefSeq" id="WP_015912295.1">
    <property type="nucleotide sequence ID" value="NC_011999.1"/>
</dbReference>
<dbReference type="SMR" id="B9E8I5"/>
<dbReference type="STRING" id="458233.MCCL_1796"/>
<dbReference type="KEGG" id="mcl:MCCL_1796"/>
<dbReference type="eggNOG" id="COG0274">
    <property type="taxonomic scope" value="Bacteria"/>
</dbReference>
<dbReference type="HOGENOM" id="CLU_053595_0_1_9"/>
<dbReference type="OrthoDB" id="9778711at2"/>
<dbReference type="UniPathway" id="UPA00002">
    <property type="reaction ID" value="UER00468"/>
</dbReference>
<dbReference type="Proteomes" id="UP000001383">
    <property type="component" value="Chromosome"/>
</dbReference>
<dbReference type="GO" id="GO:0005737">
    <property type="term" value="C:cytoplasm"/>
    <property type="evidence" value="ECO:0007669"/>
    <property type="project" value="UniProtKB-SubCell"/>
</dbReference>
<dbReference type="GO" id="GO:0004139">
    <property type="term" value="F:deoxyribose-phosphate aldolase activity"/>
    <property type="evidence" value="ECO:0007669"/>
    <property type="project" value="UniProtKB-UniRule"/>
</dbReference>
<dbReference type="GO" id="GO:0006018">
    <property type="term" value="P:2-deoxyribose 1-phosphate catabolic process"/>
    <property type="evidence" value="ECO:0007669"/>
    <property type="project" value="UniProtKB-UniRule"/>
</dbReference>
<dbReference type="GO" id="GO:0016052">
    <property type="term" value="P:carbohydrate catabolic process"/>
    <property type="evidence" value="ECO:0007669"/>
    <property type="project" value="TreeGrafter"/>
</dbReference>
<dbReference type="GO" id="GO:0009264">
    <property type="term" value="P:deoxyribonucleotide catabolic process"/>
    <property type="evidence" value="ECO:0007669"/>
    <property type="project" value="InterPro"/>
</dbReference>
<dbReference type="CDD" id="cd00959">
    <property type="entry name" value="DeoC"/>
    <property type="match status" value="1"/>
</dbReference>
<dbReference type="FunFam" id="3.20.20.70:FF:000044">
    <property type="entry name" value="Deoxyribose-phosphate aldolase"/>
    <property type="match status" value="1"/>
</dbReference>
<dbReference type="Gene3D" id="3.20.20.70">
    <property type="entry name" value="Aldolase class I"/>
    <property type="match status" value="1"/>
</dbReference>
<dbReference type="HAMAP" id="MF_00114">
    <property type="entry name" value="DeoC_type1"/>
    <property type="match status" value="1"/>
</dbReference>
<dbReference type="InterPro" id="IPR013785">
    <property type="entry name" value="Aldolase_TIM"/>
</dbReference>
<dbReference type="InterPro" id="IPR011343">
    <property type="entry name" value="DeoC"/>
</dbReference>
<dbReference type="InterPro" id="IPR002915">
    <property type="entry name" value="DeoC/FbaB/LacD_aldolase"/>
</dbReference>
<dbReference type="InterPro" id="IPR028581">
    <property type="entry name" value="DeoC_typeI"/>
</dbReference>
<dbReference type="NCBIfam" id="TIGR00126">
    <property type="entry name" value="deoC"/>
    <property type="match status" value="1"/>
</dbReference>
<dbReference type="PANTHER" id="PTHR10889">
    <property type="entry name" value="DEOXYRIBOSE-PHOSPHATE ALDOLASE"/>
    <property type="match status" value="1"/>
</dbReference>
<dbReference type="PANTHER" id="PTHR10889:SF1">
    <property type="entry name" value="DEOXYRIBOSE-PHOSPHATE ALDOLASE"/>
    <property type="match status" value="1"/>
</dbReference>
<dbReference type="Pfam" id="PF01791">
    <property type="entry name" value="DeoC"/>
    <property type="match status" value="1"/>
</dbReference>
<dbReference type="PIRSF" id="PIRSF001357">
    <property type="entry name" value="DeoC"/>
    <property type="match status" value="1"/>
</dbReference>
<dbReference type="SMART" id="SM01133">
    <property type="entry name" value="DeoC"/>
    <property type="match status" value="1"/>
</dbReference>
<dbReference type="SUPFAM" id="SSF51569">
    <property type="entry name" value="Aldolase"/>
    <property type="match status" value="1"/>
</dbReference>
<evidence type="ECO:0000255" key="1">
    <source>
        <dbReference type="HAMAP-Rule" id="MF_00114"/>
    </source>
</evidence>